<reference key="1">
    <citation type="submission" date="2008-06" db="EMBL/GenBank/DDBJ databases">
        <title>Lactobacillus casei BL23 complete genome sequence.</title>
        <authorList>
            <person name="Maze A."/>
            <person name="Boel G."/>
            <person name="Bourand A."/>
            <person name="Loux V."/>
            <person name="Gibrat J.F."/>
            <person name="Zuniga M."/>
            <person name="Hartke A."/>
            <person name="Deutscher J."/>
        </authorList>
    </citation>
    <scope>NUCLEOTIDE SEQUENCE [LARGE SCALE GENOMIC DNA]</scope>
    <source>
        <strain>BL23</strain>
    </source>
</reference>
<gene>
    <name evidence="1" type="primary">rplJ</name>
    <name type="ordered locus">LCABL_24550</name>
</gene>
<comment type="function">
    <text evidence="1">Forms part of the ribosomal stalk, playing a central role in the interaction of the ribosome with GTP-bound translation factors.</text>
</comment>
<comment type="subunit">
    <text evidence="1">Part of the ribosomal stalk of the 50S ribosomal subunit. The N-terminus interacts with L11 and the large rRNA to form the base of the stalk. The C-terminus forms an elongated spine to which L12 dimers bind in a sequential fashion forming a multimeric L10(L12)X complex.</text>
</comment>
<comment type="similarity">
    <text evidence="1">Belongs to the universal ribosomal protein uL10 family.</text>
</comment>
<keyword id="KW-0687">Ribonucleoprotein</keyword>
<keyword id="KW-0689">Ribosomal protein</keyword>
<keyword id="KW-0694">RNA-binding</keyword>
<keyword id="KW-0699">rRNA-binding</keyword>
<sequence>MSEQAIAKKAEIVKSISEQFKSATSAVVVDYLGLTVEQVTALRKELREAGVKMEVLKNTYLRRAADANGYEALDDVFKGPTAVAFSNDDPVAPARIMAKYADQFDALKIKGGIIENKVASLDTIMEMSKMPDREGLLSQLASVLQAPVRDFALVVKAVAEAKDEEPAA</sequence>
<accession>B3WA02</accession>
<feature type="chain" id="PRO_1000120977" description="Large ribosomal subunit protein uL10">
    <location>
        <begin position="1"/>
        <end position="168"/>
    </location>
</feature>
<organism>
    <name type="scientific">Lacticaseibacillus casei (strain BL23)</name>
    <name type="common">Lactobacillus casei</name>
    <dbReference type="NCBI Taxonomy" id="543734"/>
    <lineage>
        <taxon>Bacteria</taxon>
        <taxon>Bacillati</taxon>
        <taxon>Bacillota</taxon>
        <taxon>Bacilli</taxon>
        <taxon>Lactobacillales</taxon>
        <taxon>Lactobacillaceae</taxon>
        <taxon>Lacticaseibacillus</taxon>
    </lineage>
</organism>
<name>RL10_LACCB</name>
<protein>
    <recommendedName>
        <fullName evidence="1">Large ribosomal subunit protein uL10</fullName>
    </recommendedName>
    <alternativeName>
        <fullName evidence="2">50S ribosomal protein L10</fullName>
    </alternativeName>
</protein>
<dbReference type="EMBL" id="FM177140">
    <property type="protein sequence ID" value="CAQ67521.1"/>
    <property type="molecule type" value="Genomic_DNA"/>
</dbReference>
<dbReference type="SMR" id="B3WA02"/>
<dbReference type="KEGG" id="lcb:LCABL_24550"/>
<dbReference type="HOGENOM" id="CLU_092227_2_0_9"/>
<dbReference type="GO" id="GO:0015934">
    <property type="term" value="C:large ribosomal subunit"/>
    <property type="evidence" value="ECO:0007669"/>
    <property type="project" value="InterPro"/>
</dbReference>
<dbReference type="GO" id="GO:0070180">
    <property type="term" value="F:large ribosomal subunit rRNA binding"/>
    <property type="evidence" value="ECO:0007669"/>
    <property type="project" value="UniProtKB-UniRule"/>
</dbReference>
<dbReference type="GO" id="GO:0003735">
    <property type="term" value="F:structural constituent of ribosome"/>
    <property type="evidence" value="ECO:0007669"/>
    <property type="project" value="InterPro"/>
</dbReference>
<dbReference type="GO" id="GO:0006412">
    <property type="term" value="P:translation"/>
    <property type="evidence" value="ECO:0007669"/>
    <property type="project" value="UniProtKB-UniRule"/>
</dbReference>
<dbReference type="CDD" id="cd05797">
    <property type="entry name" value="Ribosomal_L10"/>
    <property type="match status" value="1"/>
</dbReference>
<dbReference type="Gene3D" id="3.30.70.1730">
    <property type="match status" value="1"/>
</dbReference>
<dbReference type="HAMAP" id="MF_00362">
    <property type="entry name" value="Ribosomal_uL10"/>
    <property type="match status" value="1"/>
</dbReference>
<dbReference type="InterPro" id="IPR001790">
    <property type="entry name" value="Ribosomal_uL10"/>
</dbReference>
<dbReference type="InterPro" id="IPR043141">
    <property type="entry name" value="Ribosomal_uL10-like_sf"/>
</dbReference>
<dbReference type="InterPro" id="IPR022973">
    <property type="entry name" value="Ribosomal_uL10_bac"/>
</dbReference>
<dbReference type="InterPro" id="IPR047865">
    <property type="entry name" value="Ribosomal_uL10_bac_type"/>
</dbReference>
<dbReference type="InterPro" id="IPR002363">
    <property type="entry name" value="Ribosomal_uL10_CS_bac"/>
</dbReference>
<dbReference type="NCBIfam" id="NF000955">
    <property type="entry name" value="PRK00099.1-1"/>
    <property type="match status" value="1"/>
</dbReference>
<dbReference type="PANTHER" id="PTHR11560">
    <property type="entry name" value="39S RIBOSOMAL PROTEIN L10, MITOCHONDRIAL"/>
    <property type="match status" value="1"/>
</dbReference>
<dbReference type="Pfam" id="PF00466">
    <property type="entry name" value="Ribosomal_L10"/>
    <property type="match status" value="1"/>
</dbReference>
<dbReference type="SUPFAM" id="SSF160369">
    <property type="entry name" value="Ribosomal protein L10-like"/>
    <property type="match status" value="1"/>
</dbReference>
<dbReference type="PROSITE" id="PS01109">
    <property type="entry name" value="RIBOSOMAL_L10"/>
    <property type="match status" value="1"/>
</dbReference>
<proteinExistence type="inferred from homology"/>
<evidence type="ECO:0000255" key="1">
    <source>
        <dbReference type="HAMAP-Rule" id="MF_00362"/>
    </source>
</evidence>
<evidence type="ECO:0000305" key="2"/>